<accession>O87077</accession>
<evidence type="ECO:0000255" key="1">
    <source>
        <dbReference type="HAMAP-Rule" id="MF_01147"/>
    </source>
</evidence>
<reference key="1">
    <citation type="submission" date="1998-05" db="EMBL/GenBank/DDBJ databases">
        <title>Characterisation of the lgt/thyA locus from Vibrio cholerae.</title>
        <authorList>
            <person name="Carlin N.I.A."/>
            <person name="Nilsson A."/>
            <person name="Todorovic M."/>
            <person name="Holmgren J."/>
            <person name="Lebens M."/>
        </authorList>
    </citation>
    <scope>NUCLEOTIDE SEQUENCE [GENOMIC DNA]</scope>
    <source>
        <strain>JS1569</strain>
    </source>
</reference>
<reference key="2">
    <citation type="journal article" date="2000" name="Nature">
        <title>DNA sequence of both chromosomes of the cholera pathogen Vibrio cholerae.</title>
        <authorList>
            <person name="Heidelberg J.F."/>
            <person name="Eisen J.A."/>
            <person name="Nelson W.C."/>
            <person name="Clayton R.A."/>
            <person name="Gwinn M.L."/>
            <person name="Dodson R.J."/>
            <person name="Haft D.H."/>
            <person name="Hickey E.K."/>
            <person name="Peterson J.D."/>
            <person name="Umayam L.A."/>
            <person name="Gill S.R."/>
            <person name="Nelson K.E."/>
            <person name="Read T.D."/>
            <person name="Tettelin H."/>
            <person name="Richardson D.L."/>
            <person name="Ermolaeva M.D."/>
            <person name="Vamathevan J.J."/>
            <person name="Bass S."/>
            <person name="Qin H."/>
            <person name="Dragoi I."/>
            <person name="Sellers P."/>
            <person name="McDonald L.A."/>
            <person name="Utterback T.R."/>
            <person name="Fleischmann R.D."/>
            <person name="Nierman W.C."/>
            <person name="White O."/>
            <person name="Salzberg S.L."/>
            <person name="Smith H.O."/>
            <person name="Colwell R.R."/>
            <person name="Mekalanos J.J."/>
            <person name="Venter J.C."/>
            <person name="Fraser C.M."/>
        </authorList>
    </citation>
    <scope>NUCLEOTIDE SEQUENCE [LARGE SCALE GENOMIC DNA]</scope>
    <source>
        <strain>ATCC 39315 / El Tor Inaba N16961</strain>
    </source>
</reference>
<dbReference type="EC" id="2.5.1.145" evidence="1"/>
<dbReference type="EMBL" id="AJ006514">
    <property type="protein sequence ID" value="CAA07072.1"/>
    <property type="molecule type" value="Genomic_DNA"/>
</dbReference>
<dbReference type="EMBL" id="AE003852">
    <property type="protein sequence ID" value="AAF93839.1"/>
    <property type="molecule type" value="Genomic_DNA"/>
</dbReference>
<dbReference type="PIR" id="B82295">
    <property type="entry name" value="B82295"/>
</dbReference>
<dbReference type="RefSeq" id="NP_230323.1">
    <property type="nucleotide sequence ID" value="NC_002505.1"/>
</dbReference>
<dbReference type="RefSeq" id="WP_001135560.1">
    <property type="nucleotide sequence ID" value="NZ_LT906614.1"/>
</dbReference>
<dbReference type="SMR" id="O87077"/>
<dbReference type="STRING" id="243277.VC_0674"/>
<dbReference type="DNASU" id="2615463"/>
<dbReference type="EnsemblBacteria" id="AAF93839">
    <property type="protein sequence ID" value="AAF93839"/>
    <property type="gene ID" value="VC_0674"/>
</dbReference>
<dbReference type="GeneID" id="88783956"/>
<dbReference type="KEGG" id="vch:VC_0674"/>
<dbReference type="PATRIC" id="fig|243277.26.peg.646"/>
<dbReference type="eggNOG" id="COG0682">
    <property type="taxonomic scope" value="Bacteria"/>
</dbReference>
<dbReference type="HOGENOM" id="CLU_013386_1_0_6"/>
<dbReference type="UniPathway" id="UPA00664"/>
<dbReference type="Proteomes" id="UP000000584">
    <property type="component" value="Chromosome 1"/>
</dbReference>
<dbReference type="GO" id="GO:0005886">
    <property type="term" value="C:plasma membrane"/>
    <property type="evidence" value="ECO:0000318"/>
    <property type="project" value="GO_Central"/>
</dbReference>
<dbReference type="GO" id="GO:0008961">
    <property type="term" value="F:phosphatidylglycerol-prolipoprotein diacylglyceryl transferase activity"/>
    <property type="evidence" value="ECO:0000318"/>
    <property type="project" value="GO_Central"/>
</dbReference>
<dbReference type="GO" id="GO:0042158">
    <property type="term" value="P:lipoprotein biosynthetic process"/>
    <property type="evidence" value="ECO:0000318"/>
    <property type="project" value="GO_Central"/>
</dbReference>
<dbReference type="HAMAP" id="MF_01147">
    <property type="entry name" value="Lgt"/>
    <property type="match status" value="1"/>
</dbReference>
<dbReference type="InterPro" id="IPR001640">
    <property type="entry name" value="Lgt"/>
</dbReference>
<dbReference type="NCBIfam" id="TIGR00544">
    <property type="entry name" value="lgt"/>
    <property type="match status" value="1"/>
</dbReference>
<dbReference type="PANTHER" id="PTHR30589:SF0">
    <property type="entry name" value="PHOSPHATIDYLGLYCEROL--PROLIPOPROTEIN DIACYLGLYCERYL TRANSFERASE"/>
    <property type="match status" value="1"/>
</dbReference>
<dbReference type="PANTHER" id="PTHR30589">
    <property type="entry name" value="PROLIPOPROTEIN DIACYLGLYCERYL TRANSFERASE"/>
    <property type="match status" value="1"/>
</dbReference>
<dbReference type="Pfam" id="PF01790">
    <property type="entry name" value="LGT"/>
    <property type="match status" value="1"/>
</dbReference>
<dbReference type="PROSITE" id="PS01311">
    <property type="entry name" value="LGT"/>
    <property type="match status" value="1"/>
</dbReference>
<organism>
    <name type="scientific">Vibrio cholerae serotype O1 (strain ATCC 39315 / El Tor Inaba N16961)</name>
    <dbReference type="NCBI Taxonomy" id="243277"/>
    <lineage>
        <taxon>Bacteria</taxon>
        <taxon>Pseudomonadati</taxon>
        <taxon>Pseudomonadota</taxon>
        <taxon>Gammaproteobacteria</taxon>
        <taxon>Vibrionales</taxon>
        <taxon>Vibrionaceae</taxon>
        <taxon>Vibrio</taxon>
    </lineage>
</organism>
<gene>
    <name evidence="1" type="primary">lgt</name>
    <name type="ordered locus">VC_0674</name>
</gene>
<comment type="function">
    <text evidence="1">Catalyzes the transfer of the diacylglyceryl group from phosphatidylglycerol to the sulfhydryl group of the N-terminal cysteine of a prolipoprotein, the first step in the formation of mature lipoproteins.</text>
</comment>
<comment type="catalytic activity">
    <reaction evidence="1">
        <text>L-cysteinyl-[prolipoprotein] + a 1,2-diacyl-sn-glycero-3-phospho-(1'-sn-glycerol) = an S-1,2-diacyl-sn-glyceryl-L-cysteinyl-[prolipoprotein] + sn-glycerol 1-phosphate + H(+)</text>
        <dbReference type="Rhea" id="RHEA:56712"/>
        <dbReference type="Rhea" id="RHEA-COMP:14679"/>
        <dbReference type="Rhea" id="RHEA-COMP:14680"/>
        <dbReference type="ChEBI" id="CHEBI:15378"/>
        <dbReference type="ChEBI" id="CHEBI:29950"/>
        <dbReference type="ChEBI" id="CHEBI:57685"/>
        <dbReference type="ChEBI" id="CHEBI:64716"/>
        <dbReference type="ChEBI" id="CHEBI:140658"/>
        <dbReference type="EC" id="2.5.1.145"/>
    </reaction>
</comment>
<comment type="pathway">
    <text evidence="1">Protein modification; lipoprotein biosynthesis (diacylglyceryl transfer).</text>
</comment>
<comment type="subcellular location">
    <subcellularLocation>
        <location evidence="1">Cell inner membrane</location>
        <topology evidence="1">Multi-pass membrane protein</topology>
    </subcellularLocation>
</comment>
<comment type="similarity">
    <text evidence="1">Belongs to the Lgt family.</text>
</comment>
<protein>
    <recommendedName>
        <fullName evidence="1">Phosphatidylglycerol--prolipoprotein diacylglyceryl transferase</fullName>
        <ecNumber evidence="1">2.5.1.145</ecNumber>
    </recommendedName>
</protein>
<keyword id="KW-0997">Cell inner membrane</keyword>
<keyword id="KW-1003">Cell membrane</keyword>
<keyword id="KW-0472">Membrane</keyword>
<keyword id="KW-1185">Reference proteome</keyword>
<keyword id="KW-0808">Transferase</keyword>
<keyword id="KW-0812">Transmembrane</keyword>
<keyword id="KW-1133">Transmembrane helix</keyword>
<proteinExistence type="inferred from homology"/>
<name>LGT_VIBCH</name>
<feature type="chain" id="PRO_0000172710" description="Phosphatidylglycerol--prolipoprotein diacylglyceryl transferase">
    <location>
        <begin position="1"/>
        <end position="271"/>
    </location>
</feature>
<feature type="transmembrane region" description="Helical" evidence="1">
    <location>
        <begin position="21"/>
        <end position="41"/>
    </location>
</feature>
<feature type="transmembrane region" description="Helical" evidence="1">
    <location>
        <begin position="60"/>
        <end position="80"/>
    </location>
</feature>
<feature type="transmembrane region" description="Helical" evidence="1">
    <location>
        <begin position="95"/>
        <end position="115"/>
    </location>
</feature>
<feature type="transmembrane region" description="Helical" evidence="1">
    <location>
        <begin position="124"/>
        <end position="144"/>
    </location>
</feature>
<feature type="transmembrane region" description="Helical" evidence="1">
    <location>
        <begin position="177"/>
        <end position="197"/>
    </location>
</feature>
<feature type="transmembrane region" description="Helical" evidence="1">
    <location>
        <begin position="203"/>
        <end position="223"/>
    </location>
</feature>
<feature type="transmembrane region" description="Helical" evidence="1">
    <location>
        <begin position="236"/>
        <end position="256"/>
    </location>
</feature>
<feature type="binding site" evidence="1">
    <location>
        <position position="143"/>
    </location>
    <ligand>
        <name>a 1,2-diacyl-sn-glycero-3-phospho-(1'-sn-glycerol)</name>
        <dbReference type="ChEBI" id="CHEBI:64716"/>
    </ligand>
</feature>
<sequence>MPQGYLQFPNIDPVLFSIGPLAVRWYGLMYLVGFLFAMWLANRRADRAGSGWTREQVSDLLFAGFLGVVIGGRVGYVIFYNFDLFLADPLYLFKVWTGGMSFHGGLLGVITAMFWYARKNQRTFFGVADFVAPLVPFGLGMGRIGNFMNSELWGRVTDVPWAFVFPNGGPLPRHPSQLYEFALEGVVLFFILNWFIGKPRPLGSVSGLFLAGYGTFRFLVEYVREPDAQLGLFGGFISMGQILSLPMVIIGILMMVWSYKRGLYQDRVAAK</sequence>